<comment type="function">
    <text evidence="1">Catalyzes the oxidation of either pyridoxine 5'-phosphate (PNP) or pyridoxamine 5'-phosphate (PMP) into pyridoxal 5'-phosphate (PLP).</text>
</comment>
<comment type="catalytic activity">
    <reaction evidence="1">
        <text>pyridoxamine 5'-phosphate + O2 + H2O = pyridoxal 5'-phosphate + H2O2 + NH4(+)</text>
        <dbReference type="Rhea" id="RHEA:15817"/>
        <dbReference type="ChEBI" id="CHEBI:15377"/>
        <dbReference type="ChEBI" id="CHEBI:15379"/>
        <dbReference type="ChEBI" id="CHEBI:16240"/>
        <dbReference type="ChEBI" id="CHEBI:28938"/>
        <dbReference type="ChEBI" id="CHEBI:58451"/>
        <dbReference type="ChEBI" id="CHEBI:597326"/>
        <dbReference type="EC" id="1.4.3.5"/>
    </reaction>
</comment>
<comment type="catalytic activity">
    <reaction evidence="1">
        <text>pyridoxine 5'-phosphate + O2 = pyridoxal 5'-phosphate + H2O2</text>
        <dbReference type="Rhea" id="RHEA:15149"/>
        <dbReference type="ChEBI" id="CHEBI:15379"/>
        <dbReference type="ChEBI" id="CHEBI:16240"/>
        <dbReference type="ChEBI" id="CHEBI:58589"/>
        <dbReference type="ChEBI" id="CHEBI:597326"/>
        <dbReference type="EC" id="1.4.3.5"/>
    </reaction>
</comment>
<comment type="cofactor">
    <cofactor evidence="1">
        <name>FMN</name>
        <dbReference type="ChEBI" id="CHEBI:58210"/>
    </cofactor>
    <text evidence="1">Binds 1 FMN per subunit.</text>
</comment>
<comment type="pathway">
    <text evidence="1">Cofactor metabolism; pyridoxal 5'-phosphate salvage; pyridoxal 5'-phosphate from pyridoxamine 5'-phosphate: step 1/1.</text>
</comment>
<comment type="pathway">
    <text evidence="1">Cofactor metabolism; pyridoxal 5'-phosphate salvage; pyridoxal 5'-phosphate from pyridoxine 5'-phosphate: step 1/1.</text>
</comment>
<comment type="subunit">
    <text evidence="1">Homodimer.</text>
</comment>
<comment type="similarity">
    <text evidence="1">Belongs to the pyridoxamine 5'-phosphate oxidase family.</text>
</comment>
<gene>
    <name evidence="1" type="primary">pdxH</name>
    <name type="ordered locus">FRAAL0106</name>
</gene>
<protein>
    <recommendedName>
        <fullName evidence="1">Pyridoxine/pyridoxamine 5'-phosphate oxidase</fullName>
        <ecNumber evidence="1">1.4.3.5</ecNumber>
    </recommendedName>
    <alternativeName>
        <fullName evidence="1">PNP/PMP oxidase</fullName>
        <shortName evidence="1">PNPOx</shortName>
    </alternativeName>
    <alternativeName>
        <fullName evidence="1">Pyridoxal 5'-phosphate synthase</fullName>
    </alternativeName>
</protein>
<proteinExistence type="inferred from homology"/>
<evidence type="ECO:0000255" key="1">
    <source>
        <dbReference type="HAMAP-Rule" id="MF_01629"/>
    </source>
</evidence>
<evidence type="ECO:0000256" key="2">
    <source>
        <dbReference type="SAM" id="MobiDB-lite"/>
    </source>
</evidence>
<accession>Q0RUF3</accession>
<keyword id="KW-0285">Flavoprotein</keyword>
<keyword id="KW-0288">FMN</keyword>
<keyword id="KW-0560">Oxidoreductase</keyword>
<keyword id="KW-0664">Pyridoxine biosynthesis</keyword>
<keyword id="KW-1185">Reference proteome</keyword>
<dbReference type="EC" id="1.4.3.5" evidence="1"/>
<dbReference type="EMBL" id="CT573213">
    <property type="protein sequence ID" value="CAJ58788.1"/>
    <property type="molecule type" value="Genomic_DNA"/>
</dbReference>
<dbReference type="RefSeq" id="WP_011601372.1">
    <property type="nucleotide sequence ID" value="NC_008278.1"/>
</dbReference>
<dbReference type="SMR" id="Q0RUF3"/>
<dbReference type="STRING" id="326424.FRAAL0106"/>
<dbReference type="KEGG" id="fal:FRAAL0106"/>
<dbReference type="eggNOG" id="COG0259">
    <property type="taxonomic scope" value="Bacteria"/>
</dbReference>
<dbReference type="HOGENOM" id="CLU_032263_2_1_11"/>
<dbReference type="OrthoDB" id="9780392at2"/>
<dbReference type="UniPathway" id="UPA01068">
    <property type="reaction ID" value="UER00304"/>
</dbReference>
<dbReference type="UniPathway" id="UPA01068">
    <property type="reaction ID" value="UER00305"/>
</dbReference>
<dbReference type="Proteomes" id="UP000000657">
    <property type="component" value="Chromosome"/>
</dbReference>
<dbReference type="GO" id="GO:0010181">
    <property type="term" value="F:FMN binding"/>
    <property type="evidence" value="ECO:0007669"/>
    <property type="project" value="UniProtKB-UniRule"/>
</dbReference>
<dbReference type="GO" id="GO:0004733">
    <property type="term" value="F:pyridoxamine phosphate oxidase activity"/>
    <property type="evidence" value="ECO:0007669"/>
    <property type="project" value="UniProtKB-UniRule"/>
</dbReference>
<dbReference type="GO" id="GO:0008615">
    <property type="term" value="P:pyridoxine biosynthetic process"/>
    <property type="evidence" value="ECO:0007669"/>
    <property type="project" value="UniProtKB-KW"/>
</dbReference>
<dbReference type="FunFam" id="2.30.110.10:FF:000020">
    <property type="entry name" value="PNPO isoform 11"/>
    <property type="match status" value="1"/>
</dbReference>
<dbReference type="Gene3D" id="2.30.110.10">
    <property type="entry name" value="Electron Transport, Fmn-binding Protein, Chain A"/>
    <property type="match status" value="1"/>
</dbReference>
<dbReference type="HAMAP" id="MF_01629">
    <property type="entry name" value="PdxH"/>
    <property type="match status" value="1"/>
</dbReference>
<dbReference type="InterPro" id="IPR000659">
    <property type="entry name" value="Pyridox_Oxase"/>
</dbReference>
<dbReference type="InterPro" id="IPR019740">
    <property type="entry name" value="Pyridox_Oxase_CS"/>
</dbReference>
<dbReference type="InterPro" id="IPR011576">
    <property type="entry name" value="Pyridox_Oxase_N"/>
</dbReference>
<dbReference type="InterPro" id="IPR019576">
    <property type="entry name" value="Pyridoxamine_oxidase_dimer_C"/>
</dbReference>
<dbReference type="InterPro" id="IPR012349">
    <property type="entry name" value="Split_barrel_FMN-bd"/>
</dbReference>
<dbReference type="NCBIfam" id="TIGR00558">
    <property type="entry name" value="pdxH"/>
    <property type="match status" value="1"/>
</dbReference>
<dbReference type="NCBIfam" id="NF004231">
    <property type="entry name" value="PRK05679.1"/>
    <property type="match status" value="1"/>
</dbReference>
<dbReference type="PANTHER" id="PTHR10851:SF0">
    <property type="entry name" value="PYRIDOXINE-5'-PHOSPHATE OXIDASE"/>
    <property type="match status" value="1"/>
</dbReference>
<dbReference type="PANTHER" id="PTHR10851">
    <property type="entry name" value="PYRIDOXINE-5-PHOSPHATE OXIDASE"/>
    <property type="match status" value="1"/>
</dbReference>
<dbReference type="Pfam" id="PF10590">
    <property type="entry name" value="PNP_phzG_C"/>
    <property type="match status" value="1"/>
</dbReference>
<dbReference type="Pfam" id="PF01243">
    <property type="entry name" value="PNPOx_N"/>
    <property type="match status" value="1"/>
</dbReference>
<dbReference type="PIRSF" id="PIRSF000190">
    <property type="entry name" value="Pyd_amn-ph_oxd"/>
    <property type="match status" value="1"/>
</dbReference>
<dbReference type="SUPFAM" id="SSF50475">
    <property type="entry name" value="FMN-binding split barrel"/>
    <property type="match status" value="1"/>
</dbReference>
<dbReference type="PROSITE" id="PS01064">
    <property type="entry name" value="PYRIDOX_OXIDASE"/>
    <property type="match status" value="1"/>
</dbReference>
<reference key="1">
    <citation type="journal article" date="2007" name="Genome Res.">
        <title>Genome characteristics of facultatively symbiotic Frankia sp. strains reflect host range and host plant biogeography.</title>
        <authorList>
            <person name="Normand P."/>
            <person name="Lapierre P."/>
            <person name="Tisa L.S."/>
            <person name="Gogarten J.P."/>
            <person name="Alloisio N."/>
            <person name="Bagnarol E."/>
            <person name="Bassi C.A."/>
            <person name="Berry A.M."/>
            <person name="Bickhart D.M."/>
            <person name="Choisne N."/>
            <person name="Couloux A."/>
            <person name="Cournoyer B."/>
            <person name="Cruveiller S."/>
            <person name="Daubin V."/>
            <person name="Demange N."/>
            <person name="Francino M.P."/>
            <person name="Goltsman E."/>
            <person name="Huang Y."/>
            <person name="Kopp O.R."/>
            <person name="Labarre L."/>
            <person name="Lapidus A."/>
            <person name="Lavire C."/>
            <person name="Marechal J."/>
            <person name="Martinez M."/>
            <person name="Mastronunzio J.E."/>
            <person name="Mullin B.C."/>
            <person name="Niemann J."/>
            <person name="Pujic P."/>
            <person name="Rawnsley T."/>
            <person name="Rouy Z."/>
            <person name="Schenowitz C."/>
            <person name="Sellstedt A."/>
            <person name="Tavares F."/>
            <person name="Tomkins J.P."/>
            <person name="Vallenet D."/>
            <person name="Valverde C."/>
            <person name="Wall L.G."/>
            <person name="Wang Y."/>
            <person name="Medigue C."/>
            <person name="Benson D.R."/>
        </authorList>
    </citation>
    <scope>NUCLEOTIDE SEQUENCE [LARGE SCALE GENOMIC DNA]</scope>
    <source>
        <strain>DSM 45986 / CECT 9034 / ACN14a</strain>
    </source>
</reference>
<name>PDXH_FRAAA</name>
<sequence length="241" mass="26590">MASNPPSAASPRRTAVSPGADRPDGPDPAGQRQSYHAGRLEPEQLATTWVEQFARWFADASTAGAGVPEANAAVFATASADGRPSARTVLLKGFDHRGFVIYTNYTSRKGRESAENPFGSLVFPWYTLERQVVAIGAVERVSRTETEQYFASRPRGSQLGAWASHQSQIIESRDVLDARAAELAARWPAGTPVPTPPFWGGLRLVPDTVEFWQGRTNRLHDRLRYRRVCTADRWAVERLSP</sequence>
<organism>
    <name type="scientific">Frankia alni (strain DSM 45986 / CECT 9034 / ACN14a)</name>
    <dbReference type="NCBI Taxonomy" id="326424"/>
    <lineage>
        <taxon>Bacteria</taxon>
        <taxon>Bacillati</taxon>
        <taxon>Actinomycetota</taxon>
        <taxon>Actinomycetes</taxon>
        <taxon>Frankiales</taxon>
        <taxon>Frankiaceae</taxon>
        <taxon>Frankia</taxon>
    </lineage>
</organism>
<feature type="chain" id="PRO_0000292293" description="Pyridoxine/pyridoxamine 5'-phosphate oxidase">
    <location>
        <begin position="1"/>
        <end position="241"/>
    </location>
</feature>
<feature type="region of interest" description="Disordered" evidence="2">
    <location>
        <begin position="1"/>
        <end position="35"/>
    </location>
</feature>
<feature type="binding site" evidence="1">
    <location>
        <begin position="32"/>
        <end position="35"/>
    </location>
    <ligand>
        <name>substrate</name>
    </ligand>
</feature>
<feature type="binding site" evidence="1">
    <location>
        <begin position="87"/>
        <end position="92"/>
    </location>
    <ligand>
        <name>FMN</name>
        <dbReference type="ChEBI" id="CHEBI:58210"/>
    </ligand>
</feature>
<feature type="binding site" evidence="1">
    <location>
        <position position="92"/>
    </location>
    <ligand>
        <name>substrate</name>
    </ligand>
</feature>
<feature type="binding site" evidence="1">
    <location>
        <begin position="102"/>
        <end position="103"/>
    </location>
    <ligand>
        <name>FMN</name>
        <dbReference type="ChEBI" id="CHEBI:58210"/>
    </ligand>
</feature>
<feature type="binding site" evidence="1">
    <location>
        <position position="108"/>
    </location>
    <ligand>
        <name>FMN</name>
        <dbReference type="ChEBI" id="CHEBI:58210"/>
    </ligand>
</feature>
<feature type="binding site" evidence="1">
    <location>
        <position position="109"/>
    </location>
    <ligand>
        <name>FMN</name>
        <dbReference type="ChEBI" id="CHEBI:58210"/>
    </ligand>
</feature>
<feature type="binding site" evidence="1">
    <location>
        <position position="131"/>
    </location>
    <ligand>
        <name>FMN</name>
        <dbReference type="ChEBI" id="CHEBI:58210"/>
    </ligand>
</feature>
<feature type="binding site" evidence="1">
    <location>
        <position position="149"/>
    </location>
    <ligand>
        <name>substrate</name>
    </ligand>
</feature>
<feature type="binding site" evidence="1">
    <location>
        <position position="153"/>
    </location>
    <ligand>
        <name>substrate</name>
    </ligand>
</feature>
<feature type="binding site" evidence="1">
    <location>
        <position position="157"/>
    </location>
    <ligand>
        <name>substrate</name>
    </ligand>
</feature>
<feature type="binding site" evidence="1">
    <location>
        <begin position="166"/>
        <end position="167"/>
    </location>
    <ligand>
        <name>FMN</name>
        <dbReference type="ChEBI" id="CHEBI:58210"/>
    </ligand>
</feature>
<feature type="binding site" evidence="1">
    <location>
        <position position="212"/>
    </location>
    <ligand>
        <name>FMN</name>
        <dbReference type="ChEBI" id="CHEBI:58210"/>
    </ligand>
</feature>
<feature type="binding site" evidence="1">
    <location>
        <begin position="218"/>
        <end position="220"/>
    </location>
    <ligand>
        <name>substrate</name>
    </ligand>
</feature>
<feature type="binding site" evidence="1">
    <location>
        <position position="222"/>
    </location>
    <ligand>
        <name>FMN</name>
        <dbReference type="ChEBI" id="CHEBI:58210"/>
    </ligand>
</feature>